<organism>
    <name type="scientific">Mycobacterium tuberculosis (strain CDC 1551 / Oshkosh)</name>
    <dbReference type="NCBI Taxonomy" id="83331"/>
    <lineage>
        <taxon>Bacteria</taxon>
        <taxon>Bacillati</taxon>
        <taxon>Actinomycetota</taxon>
        <taxon>Actinomycetes</taxon>
        <taxon>Mycobacteriales</taxon>
        <taxon>Mycobacteriaceae</taxon>
        <taxon>Mycobacterium</taxon>
        <taxon>Mycobacterium tuberculosis complex</taxon>
    </lineage>
</organism>
<gene>
    <name type="ordered locus">MT1451</name>
</gene>
<accession>P9WGX2</accession>
<accession>L0T6K0</accession>
<accession>P71675</accession>
<comment type="function">
    <text evidence="1">May act as RNA methyltransferase.</text>
</comment>
<comment type="similarity">
    <text evidence="2">Belongs to the class I-like SAM-binding methyltransferase superfamily. RsmB/NOP family.</text>
</comment>
<sequence>MTPRSRGPRRRPLDPARRAAFETLRAVSARDAYANLVLPALLAQRGIGGRDAAFATELTYGTCRARGLLDAVIGAAAERSPQAIDPVLLDLLRLGTYQLLRTRVDAHAAVSTTVEQAGIEFDSARAGFVNGVLRTIAGRDERSWVGELAPDAQNDPIGHAAFVHAHPRWIAQAFADALGAAVGELEAVLASDDERPAVHLAARPGVLTAGELARAVRGTVGRYSPFAVYLPRGDPGRLAPVRDGQALVQDEGSQLVARALTLAPVDGDTGRWLDLCAGPGGKTALLAGLGLQCAARVTAVEPSPHRADLVAQNTRGLPVELLRVDGRHTDLDPGFDRVLVDAPCTGLGALRRRPEARWRRQPADVAALAKLQRELLSAAIALTRPGGVVLYATCSPHLAETVGAVADALRRHPVHALDTRPLFEPVIAGLGEGPHVQLWPHRHGTDAMFAAALRRLT</sequence>
<protein>
    <recommendedName>
        <fullName>Putative methyltransferase MT1451</fullName>
        <ecNumber>2.1.1.-</ecNumber>
    </recommendedName>
</protein>
<proteinExistence type="inferred from homology"/>
<evidence type="ECO:0000250" key="1"/>
<evidence type="ECO:0000255" key="2">
    <source>
        <dbReference type="PROSITE-ProRule" id="PRU01023"/>
    </source>
</evidence>
<reference key="1">
    <citation type="journal article" date="2002" name="J. Bacteriol.">
        <title>Whole-genome comparison of Mycobacterium tuberculosis clinical and laboratory strains.</title>
        <authorList>
            <person name="Fleischmann R.D."/>
            <person name="Alland D."/>
            <person name="Eisen J.A."/>
            <person name="Carpenter L."/>
            <person name="White O."/>
            <person name="Peterson J.D."/>
            <person name="DeBoy R.T."/>
            <person name="Dodson R.J."/>
            <person name="Gwinn M.L."/>
            <person name="Haft D.H."/>
            <person name="Hickey E.K."/>
            <person name="Kolonay J.F."/>
            <person name="Nelson W.C."/>
            <person name="Umayam L.A."/>
            <person name="Ermolaeva M.D."/>
            <person name="Salzberg S.L."/>
            <person name="Delcher A."/>
            <person name="Utterback T.R."/>
            <person name="Weidman J.F."/>
            <person name="Khouri H.M."/>
            <person name="Gill J."/>
            <person name="Mikula A."/>
            <person name="Bishai W."/>
            <person name="Jacobs W.R. Jr."/>
            <person name="Venter J.C."/>
            <person name="Fraser C.M."/>
        </authorList>
    </citation>
    <scope>NUCLEOTIDE SEQUENCE [LARGE SCALE GENOMIC DNA]</scope>
    <source>
        <strain>CDC 1551 / Oshkosh</strain>
    </source>
</reference>
<dbReference type="EC" id="2.1.1.-"/>
<dbReference type="EMBL" id="AE000516">
    <property type="protein sequence ID" value="AAK45716.1"/>
    <property type="molecule type" value="Genomic_DNA"/>
</dbReference>
<dbReference type="PIR" id="D70901">
    <property type="entry name" value="D70901"/>
</dbReference>
<dbReference type="RefSeq" id="WP_003898865.1">
    <property type="nucleotide sequence ID" value="NZ_KK341227.1"/>
</dbReference>
<dbReference type="SMR" id="P9WGX2"/>
<dbReference type="KEGG" id="mtc:MT1451"/>
<dbReference type="PATRIC" id="fig|83331.31.peg.1559"/>
<dbReference type="HOGENOM" id="CLU_005316_0_3_11"/>
<dbReference type="Proteomes" id="UP000001020">
    <property type="component" value="Chromosome"/>
</dbReference>
<dbReference type="GO" id="GO:0003723">
    <property type="term" value="F:RNA binding"/>
    <property type="evidence" value="ECO:0007669"/>
    <property type="project" value="UniProtKB-KW"/>
</dbReference>
<dbReference type="GO" id="GO:0008173">
    <property type="term" value="F:RNA methyltransferase activity"/>
    <property type="evidence" value="ECO:0007669"/>
    <property type="project" value="InterPro"/>
</dbReference>
<dbReference type="GO" id="GO:0006355">
    <property type="term" value="P:regulation of DNA-templated transcription"/>
    <property type="evidence" value="ECO:0007669"/>
    <property type="project" value="InterPro"/>
</dbReference>
<dbReference type="GO" id="GO:0001510">
    <property type="term" value="P:RNA methylation"/>
    <property type="evidence" value="ECO:0007669"/>
    <property type="project" value="InterPro"/>
</dbReference>
<dbReference type="CDD" id="cd02440">
    <property type="entry name" value="AdoMet_MTases"/>
    <property type="match status" value="1"/>
</dbReference>
<dbReference type="CDD" id="cd00620">
    <property type="entry name" value="Methyltransferase_Sun"/>
    <property type="match status" value="1"/>
</dbReference>
<dbReference type="FunFam" id="3.40.50.150:FF:000257">
    <property type="entry name" value="16S rRNA methyltransferase"/>
    <property type="match status" value="1"/>
</dbReference>
<dbReference type="Gene3D" id="1.10.940.10">
    <property type="entry name" value="NusB-like"/>
    <property type="match status" value="1"/>
</dbReference>
<dbReference type="Gene3D" id="3.40.50.150">
    <property type="entry name" value="Vaccinia Virus protein VP39"/>
    <property type="match status" value="1"/>
</dbReference>
<dbReference type="InterPro" id="IPR049560">
    <property type="entry name" value="MeTrfase_RsmB-F_NOP2_cat"/>
</dbReference>
<dbReference type="InterPro" id="IPR001678">
    <property type="entry name" value="MeTrfase_RsmB-F_NOP2_dom"/>
</dbReference>
<dbReference type="InterPro" id="IPR035926">
    <property type="entry name" value="NusB-like_sf"/>
</dbReference>
<dbReference type="InterPro" id="IPR006027">
    <property type="entry name" value="NusB_RsmB_TIM44"/>
</dbReference>
<dbReference type="InterPro" id="IPR023267">
    <property type="entry name" value="RCMT"/>
</dbReference>
<dbReference type="InterPro" id="IPR048019">
    <property type="entry name" value="RsmB-like_N"/>
</dbReference>
<dbReference type="InterPro" id="IPR018314">
    <property type="entry name" value="RsmB/NOL1/NOP2-like_CS"/>
</dbReference>
<dbReference type="InterPro" id="IPR029063">
    <property type="entry name" value="SAM-dependent_MTases_sf"/>
</dbReference>
<dbReference type="PANTHER" id="PTHR22807">
    <property type="entry name" value="NOP2 YEAST -RELATED NOL1/NOP2/FMU SUN DOMAIN-CONTAINING"/>
    <property type="match status" value="1"/>
</dbReference>
<dbReference type="PANTHER" id="PTHR22807:SF53">
    <property type="entry name" value="RIBOSOMAL RNA SMALL SUBUNIT METHYLTRANSFERASE B-RELATED"/>
    <property type="match status" value="1"/>
</dbReference>
<dbReference type="Pfam" id="PF01189">
    <property type="entry name" value="Methyltr_RsmB-F"/>
    <property type="match status" value="1"/>
</dbReference>
<dbReference type="Pfam" id="PF01029">
    <property type="entry name" value="NusB"/>
    <property type="match status" value="1"/>
</dbReference>
<dbReference type="PRINTS" id="PR02008">
    <property type="entry name" value="RCMTFAMILY"/>
</dbReference>
<dbReference type="SUPFAM" id="SSF48013">
    <property type="entry name" value="NusB-like"/>
    <property type="match status" value="1"/>
</dbReference>
<dbReference type="SUPFAM" id="SSF53335">
    <property type="entry name" value="S-adenosyl-L-methionine-dependent methyltransferases"/>
    <property type="match status" value="1"/>
</dbReference>
<dbReference type="PROSITE" id="PS01153">
    <property type="entry name" value="NOL1_NOP2_SUN"/>
    <property type="match status" value="1"/>
</dbReference>
<dbReference type="PROSITE" id="PS51686">
    <property type="entry name" value="SAM_MT_RSMB_NOP"/>
    <property type="match status" value="1"/>
</dbReference>
<keyword id="KW-0489">Methyltransferase</keyword>
<keyword id="KW-1185">Reference proteome</keyword>
<keyword id="KW-0694">RNA-binding</keyword>
<keyword id="KW-0949">S-adenosyl-L-methionine</keyword>
<keyword id="KW-0808">Transferase</keyword>
<feature type="chain" id="PRO_0000428287" description="Putative methyltransferase MT1451">
    <location>
        <begin position="1"/>
        <end position="457"/>
    </location>
</feature>
<feature type="active site" description="Nucleophile" evidence="2">
    <location>
        <position position="394"/>
    </location>
</feature>
<feature type="binding site" evidence="2">
    <location>
        <begin position="276"/>
        <end position="282"/>
    </location>
    <ligand>
        <name>S-adenosyl-L-methionine</name>
        <dbReference type="ChEBI" id="CHEBI:59789"/>
    </ligand>
</feature>
<feature type="binding site" evidence="2">
    <location>
        <position position="301"/>
    </location>
    <ligand>
        <name>S-adenosyl-L-methionine</name>
        <dbReference type="ChEBI" id="CHEBI:59789"/>
    </ligand>
</feature>
<feature type="binding site" evidence="2">
    <location>
        <position position="325"/>
    </location>
    <ligand>
        <name>S-adenosyl-L-methionine</name>
        <dbReference type="ChEBI" id="CHEBI:59789"/>
    </ligand>
</feature>
<feature type="binding site" evidence="2">
    <location>
        <position position="341"/>
    </location>
    <ligand>
        <name>S-adenosyl-L-methionine</name>
        <dbReference type="ChEBI" id="CHEBI:59789"/>
    </ligand>
</feature>
<name>Y1407_MYCTO</name>